<protein>
    <recommendedName>
        <fullName>Chaperone protein dnaK</fullName>
    </recommendedName>
    <alternativeName>
        <fullName evidence="1">HSP70</fullName>
    </alternativeName>
    <alternativeName>
        <fullName evidence="1">Heat shock 70 kDa protein</fullName>
    </alternativeName>
    <alternativeName>
        <fullName evidence="1">Heat shock protein 70</fullName>
    </alternativeName>
</protein>
<geneLocation type="chloroplast"/>
<dbReference type="EMBL" id="AB002583">
    <property type="protein sequence ID" value="BAC76230.1"/>
    <property type="molecule type" value="Genomic_DNA"/>
</dbReference>
<dbReference type="RefSeq" id="NP_849068.1">
    <property type="nucleotide sequence ID" value="NC_004799.1"/>
</dbReference>
<dbReference type="SMR" id="Q85FW4"/>
<dbReference type="STRING" id="280699.Q85FW4"/>
<dbReference type="EnsemblPlants" id="CMV163CT">
    <property type="protein sequence ID" value="CMV163CT"/>
    <property type="gene ID" value="CMV163C"/>
</dbReference>
<dbReference type="GeneID" id="844886"/>
<dbReference type="Gramene" id="CMV163CT">
    <property type="protein sequence ID" value="CMV163CT"/>
    <property type="gene ID" value="CMV163C"/>
</dbReference>
<dbReference type="KEGG" id="cme:CymeCp136"/>
<dbReference type="eggNOG" id="KOG0102">
    <property type="taxonomic scope" value="Eukaryota"/>
</dbReference>
<dbReference type="HOGENOM" id="CLU_005965_2_4_1"/>
<dbReference type="Proteomes" id="UP000007014">
    <property type="component" value="Chloroplast"/>
</dbReference>
<dbReference type="GO" id="GO:0009507">
    <property type="term" value="C:chloroplast"/>
    <property type="evidence" value="ECO:0007669"/>
    <property type="project" value="UniProtKB-SubCell"/>
</dbReference>
<dbReference type="GO" id="GO:0005524">
    <property type="term" value="F:ATP binding"/>
    <property type="evidence" value="ECO:0007669"/>
    <property type="project" value="UniProtKB-UniRule"/>
</dbReference>
<dbReference type="GO" id="GO:0140662">
    <property type="term" value="F:ATP-dependent protein folding chaperone"/>
    <property type="evidence" value="ECO:0007669"/>
    <property type="project" value="InterPro"/>
</dbReference>
<dbReference type="GO" id="GO:0051082">
    <property type="term" value="F:unfolded protein binding"/>
    <property type="evidence" value="ECO:0007669"/>
    <property type="project" value="InterPro"/>
</dbReference>
<dbReference type="CDD" id="cd10234">
    <property type="entry name" value="ASKHA_NBD_HSP70_DnaK-like"/>
    <property type="match status" value="1"/>
</dbReference>
<dbReference type="FunFam" id="2.60.34.10:FF:000014">
    <property type="entry name" value="Chaperone protein DnaK HSP70"/>
    <property type="match status" value="1"/>
</dbReference>
<dbReference type="FunFam" id="3.30.420.40:FF:000020">
    <property type="entry name" value="Chaperone protein HscA homolog"/>
    <property type="match status" value="1"/>
</dbReference>
<dbReference type="FunFam" id="3.30.420.40:FF:000004">
    <property type="entry name" value="Molecular chaperone DnaK"/>
    <property type="match status" value="1"/>
</dbReference>
<dbReference type="FunFam" id="3.90.640.10:FF:000003">
    <property type="entry name" value="Molecular chaperone DnaK"/>
    <property type="match status" value="1"/>
</dbReference>
<dbReference type="Gene3D" id="3.30.420.40">
    <property type="match status" value="2"/>
</dbReference>
<dbReference type="Gene3D" id="3.90.640.10">
    <property type="entry name" value="Actin, Chain A, domain 4"/>
    <property type="match status" value="1"/>
</dbReference>
<dbReference type="Gene3D" id="2.60.34.10">
    <property type="entry name" value="Substrate Binding Domain Of DNAk, Chain A, domain 1"/>
    <property type="match status" value="1"/>
</dbReference>
<dbReference type="HAMAP" id="MF_00332">
    <property type="entry name" value="DnaK"/>
    <property type="match status" value="1"/>
</dbReference>
<dbReference type="InterPro" id="IPR043129">
    <property type="entry name" value="ATPase_NBD"/>
</dbReference>
<dbReference type="InterPro" id="IPR012725">
    <property type="entry name" value="Chaperone_DnaK"/>
</dbReference>
<dbReference type="InterPro" id="IPR018181">
    <property type="entry name" value="Heat_shock_70_CS"/>
</dbReference>
<dbReference type="InterPro" id="IPR029047">
    <property type="entry name" value="HSP70_peptide-bd_sf"/>
</dbReference>
<dbReference type="InterPro" id="IPR013126">
    <property type="entry name" value="Hsp_70_fam"/>
</dbReference>
<dbReference type="NCBIfam" id="NF001413">
    <property type="entry name" value="PRK00290.1"/>
    <property type="match status" value="1"/>
</dbReference>
<dbReference type="NCBIfam" id="NF003520">
    <property type="entry name" value="PRK05183.1"/>
    <property type="match status" value="1"/>
</dbReference>
<dbReference type="NCBIfam" id="TIGR02350">
    <property type="entry name" value="prok_dnaK"/>
    <property type="match status" value="1"/>
</dbReference>
<dbReference type="PANTHER" id="PTHR19375">
    <property type="entry name" value="HEAT SHOCK PROTEIN 70KDA"/>
    <property type="match status" value="1"/>
</dbReference>
<dbReference type="Pfam" id="PF00012">
    <property type="entry name" value="HSP70"/>
    <property type="match status" value="1"/>
</dbReference>
<dbReference type="PRINTS" id="PR00301">
    <property type="entry name" value="HEATSHOCK70"/>
</dbReference>
<dbReference type="SUPFAM" id="SSF53067">
    <property type="entry name" value="Actin-like ATPase domain"/>
    <property type="match status" value="2"/>
</dbReference>
<dbReference type="SUPFAM" id="SSF100920">
    <property type="entry name" value="Heat shock protein 70kD (HSP70), peptide-binding domain"/>
    <property type="match status" value="1"/>
</dbReference>
<dbReference type="PROSITE" id="PS00297">
    <property type="entry name" value="HSP70_1"/>
    <property type="match status" value="1"/>
</dbReference>
<dbReference type="PROSITE" id="PS00329">
    <property type="entry name" value="HSP70_2"/>
    <property type="match status" value="1"/>
</dbReference>
<dbReference type="PROSITE" id="PS01036">
    <property type="entry name" value="HSP70_3"/>
    <property type="match status" value="1"/>
</dbReference>
<feature type="chain" id="PRO_0000078606" description="Chaperone protein dnaK">
    <location>
        <begin position="1"/>
        <end position="607"/>
    </location>
</feature>
<feature type="region of interest" description="Disordered" evidence="2">
    <location>
        <begin position="579"/>
        <end position="607"/>
    </location>
</feature>
<feature type="compositionally biased region" description="Polar residues" evidence="2">
    <location>
        <begin position="579"/>
        <end position="591"/>
    </location>
</feature>
<feature type="compositionally biased region" description="Basic and acidic residues" evidence="2">
    <location>
        <begin position="592"/>
        <end position="607"/>
    </location>
</feature>
<evidence type="ECO:0000255" key="1">
    <source>
        <dbReference type="HAMAP-Rule" id="MF_00332"/>
    </source>
</evidence>
<evidence type="ECO:0000256" key="2">
    <source>
        <dbReference type="SAM" id="MobiDB-lite"/>
    </source>
</evidence>
<comment type="function">
    <text evidence="1">Acts as a chaperone.</text>
</comment>
<comment type="subcellular location">
    <subcellularLocation>
        <location>Plastid</location>
        <location>Chloroplast</location>
    </subcellularLocation>
</comment>
<comment type="similarity">
    <text evidence="1">Belongs to the heat shock protein 70 family.</text>
</comment>
<keyword id="KW-0067">ATP-binding</keyword>
<keyword id="KW-0143">Chaperone</keyword>
<keyword id="KW-0150">Chloroplast</keyword>
<keyword id="KW-0547">Nucleotide-binding</keyword>
<keyword id="KW-0934">Plastid</keyword>
<keyword id="KW-1185">Reference proteome</keyword>
<proteinExistence type="inferred from homology"/>
<organism>
    <name type="scientific">Cyanidioschyzon merolae (strain NIES-3377 / 10D)</name>
    <name type="common">Unicellular red alga</name>
    <dbReference type="NCBI Taxonomy" id="280699"/>
    <lineage>
        <taxon>Eukaryota</taxon>
        <taxon>Rhodophyta</taxon>
        <taxon>Bangiophyceae</taxon>
        <taxon>Cyanidiales</taxon>
        <taxon>Cyanidiaceae</taxon>
        <taxon>Cyanidioschyzon</taxon>
    </lineage>
</organism>
<reference key="1">
    <citation type="journal article" date="2003" name="DNA Res.">
        <title>Complete sequence and analysis of the plastid genome of the unicellular red alga Cyanidioschyzon merolae.</title>
        <authorList>
            <person name="Ohta N."/>
            <person name="Matsuzaki M."/>
            <person name="Misumi O."/>
            <person name="Miyagishima S.-Y."/>
            <person name="Nozaki H."/>
            <person name="Tanaka K."/>
            <person name="Shin-i T."/>
            <person name="Kohara Y."/>
            <person name="Kuroiwa T."/>
        </authorList>
    </citation>
    <scope>NUCLEOTIDE SEQUENCE [LARGE SCALE GENOMIC DNA]</scope>
    <source>
        <strain>NIES-3377 / 10D</strain>
    </source>
</reference>
<accession>Q85FW4</accession>
<name>DNAK_CYAM1</name>
<gene>
    <name evidence="1" type="primary">dnaK</name>
</gene>
<sequence>MAKVVGIDLGTTNSVIAVMEGGQPTVVPNSEGFRTTPSVVAYTKNGDLLVGQIAKRQAVINPGNTFYSVKRFIGRKFSEIEQEAKQVPYPVQADGKGNVRIFCSAKDKFFAPEEISAQVLRKLVDSASQYLGEKVTQAVITVPAYFNDSQRQATKDAGKIAGLDVLRIINEPTAASLAYGLDKKSNEKILVFDLGGGTFDVSILEIGDGVFEVLATSGDTHLGGDDFDKKIVDWLIDNWKRIEGIDLSKDKQALQRLTEAAEKAKIELSNVTQTDINLPFITATADGPKHLDQTLTRAQFEQLTSDLIERCRKPVEQALTDAKLSKQDIDEVVLVGGSTRIPAVQQLVKDLLGKQPNQSVNPDEVVAIGAAIQAGVLAGEVKNILLLDVCPLSLGVETLGGIMTKMIPRNTTIPTRKTEIYSTAVDNQTNVEIHVLQGERELAKDNKSLGTFRLDGIPPAPRGVPQIEVTFDIDANGILSVTAKERSTGKQQSITITGASTLDQSEIERMVKEAEKNAEEDRKKREQIETKNLAESVYYQAEKMGLKDNAQELKNAIDQLDYEGMKNLTQQVQTLIAQKASETSNAKTNGKASEKEDVIDADFKAQE</sequence>